<keyword id="KW-0028">Amino-acid biosynthesis</keyword>
<keyword id="KW-0057">Aromatic amino acid biosynthesis</keyword>
<keyword id="KW-0521">NADP</keyword>
<keyword id="KW-0560">Oxidoreductase</keyword>
<reference key="1">
    <citation type="submission" date="2009-06" db="EMBL/GenBank/DDBJ databases">
        <title>Complete sequence of chromosome of Geopacillus sp. WCH70.</title>
        <authorList>
            <consortium name="US DOE Joint Genome Institute"/>
            <person name="Lucas S."/>
            <person name="Copeland A."/>
            <person name="Lapidus A."/>
            <person name="Glavina del Rio T."/>
            <person name="Dalin E."/>
            <person name="Tice H."/>
            <person name="Bruce D."/>
            <person name="Goodwin L."/>
            <person name="Pitluck S."/>
            <person name="Chertkov O."/>
            <person name="Brettin T."/>
            <person name="Detter J.C."/>
            <person name="Han C."/>
            <person name="Larimer F."/>
            <person name="Land M."/>
            <person name="Hauser L."/>
            <person name="Kyrpides N."/>
            <person name="Mikhailova N."/>
            <person name="Brumm P."/>
            <person name="Mead D.A."/>
            <person name="Richardson P."/>
        </authorList>
    </citation>
    <scope>NUCLEOTIDE SEQUENCE [LARGE SCALE GENOMIC DNA]</scope>
    <source>
        <strain>WCH70</strain>
    </source>
</reference>
<comment type="function">
    <text evidence="1">Involved in the biosynthesis of the chorismate, which leads to the biosynthesis of aromatic amino acids. Catalyzes the reversible NADPH linked reduction of 3-dehydroshikimate (DHSA) to yield shikimate (SA).</text>
</comment>
<comment type="catalytic activity">
    <reaction evidence="1">
        <text>shikimate + NADP(+) = 3-dehydroshikimate + NADPH + H(+)</text>
        <dbReference type="Rhea" id="RHEA:17737"/>
        <dbReference type="ChEBI" id="CHEBI:15378"/>
        <dbReference type="ChEBI" id="CHEBI:16630"/>
        <dbReference type="ChEBI" id="CHEBI:36208"/>
        <dbReference type="ChEBI" id="CHEBI:57783"/>
        <dbReference type="ChEBI" id="CHEBI:58349"/>
        <dbReference type="EC" id="1.1.1.25"/>
    </reaction>
</comment>
<comment type="pathway">
    <text evidence="1">Metabolic intermediate biosynthesis; chorismate biosynthesis; chorismate from D-erythrose 4-phosphate and phosphoenolpyruvate: step 4/7.</text>
</comment>
<comment type="subunit">
    <text evidence="1">Homodimer.</text>
</comment>
<comment type="similarity">
    <text evidence="1">Belongs to the shikimate dehydrogenase family.</text>
</comment>
<accession>C5D4W2</accession>
<gene>
    <name evidence="1" type="primary">aroE</name>
    <name type="ordered locus">GWCH70_2458</name>
</gene>
<evidence type="ECO:0000255" key="1">
    <source>
        <dbReference type="HAMAP-Rule" id="MF_00222"/>
    </source>
</evidence>
<feature type="chain" id="PRO_1000204266" description="Shikimate dehydrogenase (NADP(+))">
    <location>
        <begin position="1"/>
        <end position="277"/>
    </location>
</feature>
<feature type="active site" description="Proton acceptor" evidence="1">
    <location>
        <position position="66"/>
    </location>
</feature>
<feature type="binding site" evidence="1">
    <location>
        <begin position="15"/>
        <end position="17"/>
    </location>
    <ligand>
        <name>shikimate</name>
        <dbReference type="ChEBI" id="CHEBI:36208"/>
    </ligand>
</feature>
<feature type="binding site" evidence="1">
    <location>
        <position position="62"/>
    </location>
    <ligand>
        <name>shikimate</name>
        <dbReference type="ChEBI" id="CHEBI:36208"/>
    </ligand>
</feature>
<feature type="binding site" evidence="1">
    <location>
        <position position="87"/>
    </location>
    <ligand>
        <name>shikimate</name>
        <dbReference type="ChEBI" id="CHEBI:36208"/>
    </ligand>
</feature>
<feature type="binding site" evidence="1">
    <location>
        <position position="102"/>
    </location>
    <ligand>
        <name>shikimate</name>
        <dbReference type="ChEBI" id="CHEBI:36208"/>
    </ligand>
</feature>
<feature type="binding site" evidence="1">
    <location>
        <begin position="127"/>
        <end position="131"/>
    </location>
    <ligand>
        <name>NADP(+)</name>
        <dbReference type="ChEBI" id="CHEBI:58349"/>
    </ligand>
</feature>
<feature type="binding site" evidence="1">
    <location>
        <begin position="151"/>
        <end position="156"/>
    </location>
    <ligand>
        <name>NADP(+)</name>
        <dbReference type="ChEBI" id="CHEBI:58349"/>
    </ligand>
</feature>
<feature type="binding site" evidence="1">
    <location>
        <position position="219"/>
    </location>
    <ligand>
        <name>NADP(+)</name>
        <dbReference type="ChEBI" id="CHEBI:58349"/>
    </ligand>
</feature>
<feature type="binding site" evidence="1">
    <location>
        <position position="221"/>
    </location>
    <ligand>
        <name>shikimate</name>
        <dbReference type="ChEBI" id="CHEBI:36208"/>
    </ligand>
</feature>
<feature type="binding site" evidence="1">
    <location>
        <position position="242"/>
    </location>
    <ligand>
        <name>NADP(+)</name>
        <dbReference type="ChEBI" id="CHEBI:58349"/>
    </ligand>
</feature>
<name>AROE_GEOSW</name>
<dbReference type="EC" id="1.1.1.25" evidence="1"/>
<dbReference type="EMBL" id="CP001638">
    <property type="protein sequence ID" value="ACS25154.1"/>
    <property type="molecule type" value="Genomic_DNA"/>
</dbReference>
<dbReference type="SMR" id="C5D4W2"/>
<dbReference type="STRING" id="471223.GWCH70_2458"/>
<dbReference type="KEGG" id="gwc:GWCH70_2458"/>
<dbReference type="eggNOG" id="COG0169">
    <property type="taxonomic scope" value="Bacteria"/>
</dbReference>
<dbReference type="HOGENOM" id="CLU_044063_4_1_9"/>
<dbReference type="OrthoDB" id="9792692at2"/>
<dbReference type="UniPathway" id="UPA00053">
    <property type="reaction ID" value="UER00087"/>
</dbReference>
<dbReference type="GO" id="GO:0005829">
    <property type="term" value="C:cytosol"/>
    <property type="evidence" value="ECO:0007669"/>
    <property type="project" value="TreeGrafter"/>
</dbReference>
<dbReference type="GO" id="GO:0050661">
    <property type="term" value="F:NADP binding"/>
    <property type="evidence" value="ECO:0007669"/>
    <property type="project" value="InterPro"/>
</dbReference>
<dbReference type="GO" id="GO:0004764">
    <property type="term" value="F:shikimate 3-dehydrogenase (NADP+) activity"/>
    <property type="evidence" value="ECO:0007669"/>
    <property type="project" value="UniProtKB-UniRule"/>
</dbReference>
<dbReference type="GO" id="GO:0008652">
    <property type="term" value="P:amino acid biosynthetic process"/>
    <property type="evidence" value="ECO:0007669"/>
    <property type="project" value="UniProtKB-KW"/>
</dbReference>
<dbReference type="GO" id="GO:0009073">
    <property type="term" value="P:aromatic amino acid family biosynthetic process"/>
    <property type="evidence" value="ECO:0007669"/>
    <property type="project" value="UniProtKB-KW"/>
</dbReference>
<dbReference type="GO" id="GO:0009423">
    <property type="term" value="P:chorismate biosynthetic process"/>
    <property type="evidence" value="ECO:0007669"/>
    <property type="project" value="UniProtKB-UniRule"/>
</dbReference>
<dbReference type="GO" id="GO:0019632">
    <property type="term" value="P:shikimate metabolic process"/>
    <property type="evidence" value="ECO:0007669"/>
    <property type="project" value="InterPro"/>
</dbReference>
<dbReference type="CDD" id="cd01065">
    <property type="entry name" value="NAD_bind_Shikimate_DH"/>
    <property type="match status" value="1"/>
</dbReference>
<dbReference type="FunFam" id="3.40.50.10860:FF:000004">
    <property type="entry name" value="Quinate/shikimate dehydrogenase"/>
    <property type="match status" value="1"/>
</dbReference>
<dbReference type="FunFam" id="3.40.50.720:FF:000086">
    <property type="entry name" value="Quinate/shikimate dehydrogenase"/>
    <property type="match status" value="1"/>
</dbReference>
<dbReference type="Gene3D" id="3.40.50.10860">
    <property type="entry name" value="Leucine Dehydrogenase, chain A, domain 1"/>
    <property type="match status" value="1"/>
</dbReference>
<dbReference type="Gene3D" id="3.40.50.720">
    <property type="entry name" value="NAD(P)-binding Rossmann-like Domain"/>
    <property type="match status" value="1"/>
</dbReference>
<dbReference type="HAMAP" id="MF_00222">
    <property type="entry name" value="Shikimate_DH_AroE"/>
    <property type="match status" value="1"/>
</dbReference>
<dbReference type="InterPro" id="IPR046346">
    <property type="entry name" value="Aminoacid_DH-like_N_sf"/>
</dbReference>
<dbReference type="InterPro" id="IPR036291">
    <property type="entry name" value="NAD(P)-bd_dom_sf"/>
</dbReference>
<dbReference type="InterPro" id="IPR041121">
    <property type="entry name" value="SDH_C"/>
</dbReference>
<dbReference type="InterPro" id="IPR011342">
    <property type="entry name" value="Shikimate_DH"/>
</dbReference>
<dbReference type="InterPro" id="IPR013708">
    <property type="entry name" value="Shikimate_DH-bd_N"/>
</dbReference>
<dbReference type="InterPro" id="IPR022893">
    <property type="entry name" value="Shikimate_DH_fam"/>
</dbReference>
<dbReference type="InterPro" id="IPR006151">
    <property type="entry name" value="Shikm_DH/Glu-tRNA_Rdtase"/>
</dbReference>
<dbReference type="NCBIfam" id="TIGR00507">
    <property type="entry name" value="aroE"/>
    <property type="match status" value="1"/>
</dbReference>
<dbReference type="NCBIfam" id="NF001319">
    <property type="entry name" value="PRK00258.3-3"/>
    <property type="match status" value="1"/>
</dbReference>
<dbReference type="PANTHER" id="PTHR21089:SF1">
    <property type="entry name" value="BIFUNCTIONAL 3-DEHYDROQUINATE DEHYDRATASE_SHIKIMATE DEHYDROGENASE, CHLOROPLASTIC"/>
    <property type="match status" value="1"/>
</dbReference>
<dbReference type="PANTHER" id="PTHR21089">
    <property type="entry name" value="SHIKIMATE DEHYDROGENASE"/>
    <property type="match status" value="1"/>
</dbReference>
<dbReference type="Pfam" id="PF18317">
    <property type="entry name" value="SDH_C"/>
    <property type="match status" value="1"/>
</dbReference>
<dbReference type="Pfam" id="PF01488">
    <property type="entry name" value="Shikimate_DH"/>
    <property type="match status" value="1"/>
</dbReference>
<dbReference type="Pfam" id="PF08501">
    <property type="entry name" value="Shikimate_dh_N"/>
    <property type="match status" value="1"/>
</dbReference>
<dbReference type="SUPFAM" id="SSF53223">
    <property type="entry name" value="Aminoacid dehydrogenase-like, N-terminal domain"/>
    <property type="match status" value="1"/>
</dbReference>
<dbReference type="SUPFAM" id="SSF51735">
    <property type="entry name" value="NAD(P)-binding Rossmann-fold domains"/>
    <property type="match status" value="1"/>
</dbReference>
<organism>
    <name type="scientific">Geobacillus sp. (strain WCH70)</name>
    <dbReference type="NCBI Taxonomy" id="471223"/>
    <lineage>
        <taxon>Bacteria</taxon>
        <taxon>Bacillati</taxon>
        <taxon>Bacillota</taxon>
        <taxon>Bacilli</taxon>
        <taxon>Bacillales</taxon>
        <taxon>Anoxybacillaceae</taxon>
        <taxon>Geobacillus</taxon>
    </lineage>
</organism>
<proteinExistence type="inferred from homology"/>
<sequence>MEKLYALFGCPVHHSLSPIMHNDAFQNMNIAAHYHAFHVEPERLKDAIAGVRALGISGVNVTIPHKTAVMPLLDEVDPTARRIGAVNTIVNRNGRLIGYNTDGPGYVRALEEEINVDIKEKRILLIGAGGAARGIYVSLADRGAKQIDICNRTVSKAKQLIDECNASVSSVVYSLNEAEERLGEYDILINTTSVGMYPNMEEMPLSLANMKEETIVSDIIYNPLETKWLKEARKRNGIIQNGVGMFVYQGALAFEKWTGIFPDVQRMKKIVIEQLRG</sequence>
<protein>
    <recommendedName>
        <fullName evidence="1">Shikimate dehydrogenase (NADP(+))</fullName>
        <shortName evidence="1">SDH</shortName>
        <ecNumber evidence="1">1.1.1.25</ecNumber>
    </recommendedName>
</protein>